<feature type="chain" id="PRO_0000429304" description="MATH domain and coiled-coil domain-containing protein At3g58380">
    <location>
        <begin position="1"/>
        <end position="307"/>
    </location>
</feature>
<feature type="domain" description="MATH" evidence="2">
    <location>
        <begin position="6"/>
        <end position="132"/>
    </location>
</feature>
<feature type="coiled-coil region" evidence="1">
    <location>
        <begin position="238"/>
        <end position="290"/>
    </location>
</feature>
<accession>Q9M2H8</accession>
<evidence type="ECO:0000255" key="1"/>
<evidence type="ECO:0000255" key="2">
    <source>
        <dbReference type="PROSITE-ProRule" id="PRU00129"/>
    </source>
</evidence>
<dbReference type="EMBL" id="AL137081">
    <property type="protein sequence ID" value="CAB68176.1"/>
    <property type="molecule type" value="Genomic_DNA"/>
</dbReference>
<dbReference type="EMBL" id="CP002686">
    <property type="protein sequence ID" value="AEE79775.1"/>
    <property type="molecule type" value="Genomic_DNA"/>
</dbReference>
<dbReference type="EMBL" id="BT010442">
    <property type="protein sequence ID" value="AAQ62443.1"/>
    <property type="molecule type" value="mRNA"/>
</dbReference>
<dbReference type="EMBL" id="AK176427">
    <property type="protein sequence ID" value="BAD44190.1"/>
    <property type="molecule type" value="mRNA"/>
</dbReference>
<dbReference type="PIR" id="T45998">
    <property type="entry name" value="T45998"/>
</dbReference>
<dbReference type="RefSeq" id="NP_191397.1">
    <property type="nucleotide sequence ID" value="NM_115700.3"/>
</dbReference>
<dbReference type="SMR" id="Q9M2H8"/>
<dbReference type="BioGRID" id="10322">
    <property type="interactions" value="4"/>
</dbReference>
<dbReference type="IntAct" id="Q9M2H8">
    <property type="interactions" value="4"/>
</dbReference>
<dbReference type="PaxDb" id="3702-AT3G58380.1"/>
<dbReference type="ProteomicsDB" id="238365"/>
<dbReference type="EnsemblPlants" id="AT3G58380.1">
    <property type="protein sequence ID" value="AT3G58380.1"/>
    <property type="gene ID" value="AT3G58380"/>
</dbReference>
<dbReference type="GeneID" id="825007"/>
<dbReference type="Gramene" id="AT3G58380.1">
    <property type="protein sequence ID" value="AT3G58380.1"/>
    <property type="gene ID" value="AT3G58380"/>
</dbReference>
<dbReference type="KEGG" id="ath:AT3G58380"/>
<dbReference type="Araport" id="AT3G58380"/>
<dbReference type="TAIR" id="AT3G58380"/>
<dbReference type="eggNOG" id="KOG1987">
    <property type="taxonomic scope" value="Eukaryota"/>
</dbReference>
<dbReference type="HOGENOM" id="CLU_026537_0_0_1"/>
<dbReference type="InParanoid" id="Q9M2H8"/>
<dbReference type="OMA" id="KETQHEF"/>
<dbReference type="PhylomeDB" id="Q9M2H8"/>
<dbReference type="PRO" id="PR:Q9M2H8"/>
<dbReference type="Proteomes" id="UP000006548">
    <property type="component" value="Chromosome 3"/>
</dbReference>
<dbReference type="ExpressionAtlas" id="Q9M2H8">
    <property type="expression patterns" value="baseline and differential"/>
</dbReference>
<dbReference type="CDD" id="cd00121">
    <property type="entry name" value="MATH"/>
    <property type="match status" value="1"/>
</dbReference>
<dbReference type="Gene3D" id="2.60.210.10">
    <property type="entry name" value="Apoptosis, Tumor Necrosis Factor Receptor Associated Protein 2, Chain A"/>
    <property type="match status" value="1"/>
</dbReference>
<dbReference type="InterPro" id="IPR050804">
    <property type="entry name" value="MATH-CC_domain_protein"/>
</dbReference>
<dbReference type="InterPro" id="IPR002083">
    <property type="entry name" value="MATH/TRAF_dom"/>
</dbReference>
<dbReference type="InterPro" id="IPR008974">
    <property type="entry name" value="TRAF-like"/>
</dbReference>
<dbReference type="PANTHER" id="PTHR46236:SF4">
    <property type="entry name" value="MATH DOMAIN-CONTAINING PROTEIN"/>
    <property type="match status" value="1"/>
</dbReference>
<dbReference type="PANTHER" id="PTHR46236">
    <property type="entry name" value="TRAF-LIKE SUPERFAMILY PROTEIN"/>
    <property type="match status" value="1"/>
</dbReference>
<dbReference type="SUPFAM" id="SSF49599">
    <property type="entry name" value="TRAF domain-like"/>
    <property type="match status" value="1"/>
</dbReference>
<dbReference type="PROSITE" id="PS50144">
    <property type="entry name" value="MATH"/>
    <property type="match status" value="1"/>
</dbReference>
<keyword id="KW-0175">Coiled coil</keyword>
<keyword id="KW-1185">Reference proteome</keyword>
<gene>
    <name type="ordered locus">At3g58380</name>
    <name type="ORF">F9D24.290</name>
</gene>
<name>MCC27_ARATH</name>
<proteinExistence type="evidence at protein level"/>
<protein>
    <recommendedName>
        <fullName>MATH domain and coiled-coil domain-containing protein At3g58380</fullName>
    </recommendedName>
    <alternativeName>
        <fullName>RTM3-like protein At3g58380</fullName>
    </alternativeName>
</protein>
<sequence>MEKEVDKKFVWVIKDLNVFYPKQSHSDPFLIAGSRWRLLALPKGTNYEFFYQYMGVADSCQSLTSSWRRHVKLRLTIVNGISHKRSIVTDSDLYFDENLPACSYPTVPPPFNLLARDAGFLICREITIVIEVVSLEVIGTSNNDGANSIDLLKQTQQIIDVNGFQVLPSQVESVKRIFEIYPNIASEVPSMKPCLKTLYMNVLLGIIETLCQLPAELSDTDLDEASIAVLFVSQGGFKVDWLEKKLKEVKEKKKNVDNGKARLQQIEEDLQKLNQKRLDLKDILDKEKANDLTANVPLSFNDVLKMF</sequence>
<comment type="interaction">
    <interactant intactId="EBI-4429615">
        <id>Q9M2H8</id>
    </interactant>
    <interactant intactId="EBI-632620">
        <id>O04492</id>
        <label>DRB1</label>
    </interactant>
    <organismsDiffer>false</organismsDiffer>
    <experiments>3</experiments>
</comment>
<comment type="interaction">
    <interactant intactId="EBI-4429615">
        <id>Q9M2H8</id>
    </interactant>
    <interactant intactId="EBI-4435064">
        <id>Q8H1G0</id>
        <label>GATA28</label>
    </interactant>
    <organismsDiffer>false</organismsDiffer>
    <experiments>3</experiments>
</comment>
<organism>
    <name type="scientific">Arabidopsis thaliana</name>
    <name type="common">Mouse-ear cress</name>
    <dbReference type="NCBI Taxonomy" id="3702"/>
    <lineage>
        <taxon>Eukaryota</taxon>
        <taxon>Viridiplantae</taxon>
        <taxon>Streptophyta</taxon>
        <taxon>Embryophyta</taxon>
        <taxon>Tracheophyta</taxon>
        <taxon>Spermatophyta</taxon>
        <taxon>Magnoliopsida</taxon>
        <taxon>eudicotyledons</taxon>
        <taxon>Gunneridae</taxon>
        <taxon>Pentapetalae</taxon>
        <taxon>rosids</taxon>
        <taxon>malvids</taxon>
        <taxon>Brassicales</taxon>
        <taxon>Brassicaceae</taxon>
        <taxon>Camelineae</taxon>
        <taxon>Arabidopsis</taxon>
    </lineage>
</organism>
<reference key="1">
    <citation type="journal article" date="2000" name="Nature">
        <title>Sequence and analysis of chromosome 3 of the plant Arabidopsis thaliana.</title>
        <authorList>
            <person name="Salanoubat M."/>
            <person name="Lemcke K."/>
            <person name="Rieger M."/>
            <person name="Ansorge W."/>
            <person name="Unseld M."/>
            <person name="Fartmann B."/>
            <person name="Valle G."/>
            <person name="Bloecker H."/>
            <person name="Perez-Alonso M."/>
            <person name="Obermaier B."/>
            <person name="Delseny M."/>
            <person name="Boutry M."/>
            <person name="Grivell L.A."/>
            <person name="Mache R."/>
            <person name="Puigdomenech P."/>
            <person name="De Simone V."/>
            <person name="Choisne N."/>
            <person name="Artiguenave F."/>
            <person name="Robert C."/>
            <person name="Brottier P."/>
            <person name="Wincker P."/>
            <person name="Cattolico L."/>
            <person name="Weissenbach J."/>
            <person name="Saurin W."/>
            <person name="Quetier F."/>
            <person name="Schaefer M."/>
            <person name="Mueller-Auer S."/>
            <person name="Gabel C."/>
            <person name="Fuchs M."/>
            <person name="Benes V."/>
            <person name="Wurmbach E."/>
            <person name="Drzonek H."/>
            <person name="Erfle H."/>
            <person name="Jordan N."/>
            <person name="Bangert S."/>
            <person name="Wiedelmann R."/>
            <person name="Kranz H."/>
            <person name="Voss H."/>
            <person name="Holland R."/>
            <person name="Brandt P."/>
            <person name="Nyakatura G."/>
            <person name="Vezzi A."/>
            <person name="D'Angelo M."/>
            <person name="Pallavicini A."/>
            <person name="Toppo S."/>
            <person name="Simionati B."/>
            <person name="Conrad A."/>
            <person name="Hornischer K."/>
            <person name="Kauer G."/>
            <person name="Loehnert T.-H."/>
            <person name="Nordsiek G."/>
            <person name="Reichelt J."/>
            <person name="Scharfe M."/>
            <person name="Schoen O."/>
            <person name="Bargues M."/>
            <person name="Terol J."/>
            <person name="Climent J."/>
            <person name="Navarro P."/>
            <person name="Collado C."/>
            <person name="Perez-Perez A."/>
            <person name="Ottenwaelder B."/>
            <person name="Duchemin D."/>
            <person name="Cooke R."/>
            <person name="Laudie M."/>
            <person name="Berger-Llauro C."/>
            <person name="Purnelle B."/>
            <person name="Masuy D."/>
            <person name="de Haan M."/>
            <person name="Maarse A.C."/>
            <person name="Alcaraz J.-P."/>
            <person name="Cottet A."/>
            <person name="Casacuberta E."/>
            <person name="Monfort A."/>
            <person name="Argiriou A."/>
            <person name="Flores M."/>
            <person name="Liguori R."/>
            <person name="Vitale D."/>
            <person name="Mannhaupt G."/>
            <person name="Haase D."/>
            <person name="Schoof H."/>
            <person name="Rudd S."/>
            <person name="Zaccaria P."/>
            <person name="Mewes H.-W."/>
            <person name="Mayer K.F.X."/>
            <person name="Kaul S."/>
            <person name="Town C.D."/>
            <person name="Koo H.L."/>
            <person name="Tallon L.J."/>
            <person name="Jenkins J."/>
            <person name="Rooney T."/>
            <person name="Rizzo M."/>
            <person name="Walts A."/>
            <person name="Utterback T."/>
            <person name="Fujii C.Y."/>
            <person name="Shea T.P."/>
            <person name="Creasy T.H."/>
            <person name="Haas B."/>
            <person name="Maiti R."/>
            <person name="Wu D."/>
            <person name="Peterson J."/>
            <person name="Van Aken S."/>
            <person name="Pai G."/>
            <person name="Militscher J."/>
            <person name="Sellers P."/>
            <person name="Gill J.E."/>
            <person name="Feldblyum T.V."/>
            <person name="Preuss D."/>
            <person name="Lin X."/>
            <person name="Nierman W.C."/>
            <person name="Salzberg S.L."/>
            <person name="White O."/>
            <person name="Venter J.C."/>
            <person name="Fraser C.M."/>
            <person name="Kaneko T."/>
            <person name="Nakamura Y."/>
            <person name="Sato S."/>
            <person name="Kato T."/>
            <person name="Asamizu E."/>
            <person name="Sasamoto S."/>
            <person name="Kimura T."/>
            <person name="Idesawa K."/>
            <person name="Kawashima K."/>
            <person name="Kishida Y."/>
            <person name="Kiyokawa C."/>
            <person name="Kohara M."/>
            <person name="Matsumoto M."/>
            <person name="Matsuno A."/>
            <person name="Muraki A."/>
            <person name="Nakayama S."/>
            <person name="Nakazaki N."/>
            <person name="Shinpo S."/>
            <person name="Takeuchi C."/>
            <person name="Wada T."/>
            <person name="Watanabe A."/>
            <person name="Yamada M."/>
            <person name="Yasuda M."/>
            <person name="Tabata S."/>
        </authorList>
    </citation>
    <scope>NUCLEOTIDE SEQUENCE [LARGE SCALE GENOMIC DNA]</scope>
    <source>
        <strain>cv. Columbia</strain>
    </source>
</reference>
<reference key="2">
    <citation type="journal article" date="2017" name="Plant J.">
        <title>Araport11: a complete reannotation of the Arabidopsis thaliana reference genome.</title>
        <authorList>
            <person name="Cheng C.Y."/>
            <person name="Krishnakumar V."/>
            <person name="Chan A.P."/>
            <person name="Thibaud-Nissen F."/>
            <person name="Schobel S."/>
            <person name="Town C.D."/>
        </authorList>
    </citation>
    <scope>GENOME REANNOTATION</scope>
    <source>
        <strain>cv. Columbia</strain>
    </source>
</reference>
<reference key="3">
    <citation type="journal article" date="2003" name="Science">
        <title>Empirical analysis of transcriptional activity in the Arabidopsis genome.</title>
        <authorList>
            <person name="Yamada K."/>
            <person name="Lim J."/>
            <person name="Dale J.M."/>
            <person name="Chen H."/>
            <person name="Shinn P."/>
            <person name="Palm C.J."/>
            <person name="Southwick A.M."/>
            <person name="Wu H.C."/>
            <person name="Kim C.J."/>
            <person name="Nguyen M."/>
            <person name="Pham P.K."/>
            <person name="Cheuk R.F."/>
            <person name="Karlin-Newmann G."/>
            <person name="Liu S.X."/>
            <person name="Lam B."/>
            <person name="Sakano H."/>
            <person name="Wu T."/>
            <person name="Yu G."/>
            <person name="Miranda M."/>
            <person name="Quach H.L."/>
            <person name="Tripp M."/>
            <person name="Chang C.H."/>
            <person name="Lee J.M."/>
            <person name="Toriumi M.J."/>
            <person name="Chan M.M."/>
            <person name="Tang C.C."/>
            <person name="Onodera C.S."/>
            <person name="Deng J.M."/>
            <person name="Akiyama K."/>
            <person name="Ansari Y."/>
            <person name="Arakawa T."/>
            <person name="Banh J."/>
            <person name="Banno F."/>
            <person name="Bowser L."/>
            <person name="Brooks S.Y."/>
            <person name="Carninci P."/>
            <person name="Chao Q."/>
            <person name="Choy N."/>
            <person name="Enju A."/>
            <person name="Goldsmith A.D."/>
            <person name="Gurjal M."/>
            <person name="Hansen N.F."/>
            <person name="Hayashizaki Y."/>
            <person name="Johnson-Hopson C."/>
            <person name="Hsuan V.W."/>
            <person name="Iida K."/>
            <person name="Karnes M."/>
            <person name="Khan S."/>
            <person name="Koesema E."/>
            <person name="Ishida J."/>
            <person name="Jiang P.X."/>
            <person name="Jones T."/>
            <person name="Kawai J."/>
            <person name="Kamiya A."/>
            <person name="Meyers C."/>
            <person name="Nakajima M."/>
            <person name="Narusaka M."/>
            <person name="Seki M."/>
            <person name="Sakurai T."/>
            <person name="Satou M."/>
            <person name="Tamse R."/>
            <person name="Vaysberg M."/>
            <person name="Wallender E.K."/>
            <person name="Wong C."/>
            <person name="Yamamura Y."/>
            <person name="Yuan S."/>
            <person name="Shinozaki K."/>
            <person name="Davis R.W."/>
            <person name="Theologis A."/>
            <person name="Ecker J.R."/>
        </authorList>
    </citation>
    <scope>NUCLEOTIDE SEQUENCE [LARGE SCALE MRNA]</scope>
    <source>
        <strain>cv. Columbia</strain>
    </source>
</reference>
<reference key="4">
    <citation type="submission" date="2004-09" db="EMBL/GenBank/DDBJ databases">
        <title>Large-scale analysis of RIKEN Arabidopsis full-length (RAFL) cDNAs.</title>
        <authorList>
            <person name="Totoki Y."/>
            <person name="Seki M."/>
            <person name="Ishida J."/>
            <person name="Nakajima M."/>
            <person name="Enju A."/>
            <person name="Kamiya A."/>
            <person name="Narusaka M."/>
            <person name="Shin-i T."/>
            <person name="Nakagawa M."/>
            <person name="Sakamoto N."/>
            <person name="Oishi K."/>
            <person name="Kohara Y."/>
            <person name="Kobayashi M."/>
            <person name="Toyoda A."/>
            <person name="Sakaki Y."/>
            <person name="Sakurai T."/>
            <person name="Iida K."/>
            <person name="Akiyama K."/>
            <person name="Satou M."/>
            <person name="Toyoda T."/>
            <person name="Konagaya A."/>
            <person name="Carninci P."/>
            <person name="Kawai J."/>
            <person name="Hayashizaki Y."/>
            <person name="Shinozaki K."/>
        </authorList>
    </citation>
    <scope>NUCLEOTIDE SEQUENCE [LARGE SCALE MRNA]</scope>
    <source>
        <strain>cv. Columbia</strain>
    </source>
</reference>
<reference key="5">
    <citation type="journal article" date="2010" name="Plant Physiol.">
        <title>RTM3, which controls long-distance movement of potyviruses, is a member of a new plant gene family encoding a meprin and TRAF homology domain-containing protein.</title>
        <authorList>
            <person name="Cosson P."/>
            <person name="Sofer L."/>
            <person name="Le Q.H."/>
            <person name="Leger V."/>
            <person name="Schurdi-Levraud V."/>
            <person name="Whitham S.A."/>
            <person name="Yamamoto M.L."/>
            <person name="Gopalan S."/>
            <person name="Le Gall O."/>
            <person name="Candresse T."/>
            <person name="Carrington J.C."/>
            <person name="Revers F."/>
        </authorList>
    </citation>
    <scope>GENE FAMILY</scope>
</reference>